<reference key="1">
    <citation type="journal article" date="2004" name="Nat. Biotechnol.">
        <title>The genome sequence of the capnophilic rumen bacterium Mannheimia succiniciproducens.</title>
        <authorList>
            <person name="Hong S.H."/>
            <person name="Kim J.S."/>
            <person name="Lee S.Y."/>
            <person name="In Y.H."/>
            <person name="Choi S.S."/>
            <person name="Rih J.-K."/>
            <person name="Kim C.H."/>
            <person name="Jeong H."/>
            <person name="Hur C.G."/>
            <person name="Kim J.J."/>
        </authorList>
    </citation>
    <scope>NUCLEOTIDE SEQUENCE [LARGE SCALE GENOMIC DNA]</scope>
    <source>
        <strain>KCTC 0769BP / MBEL55E</strain>
    </source>
</reference>
<name>COAA_MANSM</name>
<keyword id="KW-0067">ATP-binding</keyword>
<keyword id="KW-0173">Coenzyme A biosynthesis</keyword>
<keyword id="KW-0963">Cytoplasm</keyword>
<keyword id="KW-0418">Kinase</keyword>
<keyword id="KW-0547">Nucleotide-binding</keyword>
<keyword id="KW-0808">Transferase</keyword>
<gene>
    <name evidence="1" type="primary">coaA</name>
    <name type="ordered locus">MS2188</name>
</gene>
<comment type="catalytic activity">
    <reaction evidence="1">
        <text>(R)-pantothenate + ATP = (R)-4'-phosphopantothenate + ADP + H(+)</text>
        <dbReference type="Rhea" id="RHEA:16373"/>
        <dbReference type="ChEBI" id="CHEBI:10986"/>
        <dbReference type="ChEBI" id="CHEBI:15378"/>
        <dbReference type="ChEBI" id="CHEBI:29032"/>
        <dbReference type="ChEBI" id="CHEBI:30616"/>
        <dbReference type="ChEBI" id="CHEBI:456216"/>
        <dbReference type="EC" id="2.7.1.33"/>
    </reaction>
</comment>
<comment type="pathway">
    <text evidence="1">Cofactor biosynthesis; coenzyme A biosynthesis; CoA from (R)-pantothenate: step 1/5.</text>
</comment>
<comment type="subcellular location">
    <subcellularLocation>
        <location evidence="1">Cytoplasm</location>
    </subcellularLocation>
</comment>
<comment type="similarity">
    <text evidence="1">Belongs to the prokaryotic pantothenate kinase family.</text>
</comment>
<feature type="chain" id="PRO_1000043225" description="Pantothenate kinase">
    <location>
        <begin position="1"/>
        <end position="317"/>
    </location>
</feature>
<feature type="binding site" evidence="1">
    <location>
        <begin position="99"/>
        <end position="106"/>
    </location>
    <ligand>
        <name>ATP</name>
        <dbReference type="ChEBI" id="CHEBI:30616"/>
    </ligand>
</feature>
<protein>
    <recommendedName>
        <fullName evidence="1">Pantothenate kinase</fullName>
        <ecNumber evidence="1">2.7.1.33</ecNumber>
    </recommendedName>
    <alternativeName>
        <fullName evidence="1">Pantothenic acid kinase</fullName>
    </alternativeName>
</protein>
<sequence>MNIESQSSVSEKFSPFLTFTRKQWAELRKSVPLKLTEQDLKPLLGFNEELSLEEVSTIYLPLARLINYYIEENLRRQTVMNRFLGNTNANVPYIISIAGSVSVGKSTSARILQSLLSNWPENRKVDLITTDGFLYPLEKLKKENLLHKKGFPVSYDTPKLIKFLADVKSGKPNVSAPIYSHLTYDIIPDKFNKVDRPDILILEGLNVLQTGSRKAEQTFVSDFVDFSVYVDADEALLKEWYIRRFLKFRESAFTDPNSYFKDYAKLSKEEAVETAANIWNTINGLNLRQNILPTRERANLILRKGADHAVQEVKLRK</sequence>
<proteinExistence type="inferred from homology"/>
<evidence type="ECO:0000255" key="1">
    <source>
        <dbReference type="HAMAP-Rule" id="MF_00215"/>
    </source>
</evidence>
<dbReference type="EC" id="2.7.1.33" evidence="1"/>
<dbReference type="EMBL" id="AE016827">
    <property type="protein sequence ID" value="AAU38795.1"/>
    <property type="molecule type" value="Genomic_DNA"/>
</dbReference>
<dbReference type="RefSeq" id="WP_011201339.1">
    <property type="nucleotide sequence ID" value="NC_006300.1"/>
</dbReference>
<dbReference type="SMR" id="Q65QG5"/>
<dbReference type="STRING" id="221988.MS2188"/>
<dbReference type="KEGG" id="msu:MS2188"/>
<dbReference type="eggNOG" id="COG1072">
    <property type="taxonomic scope" value="Bacteria"/>
</dbReference>
<dbReference type="HOGENOM" id="CLU_053818_1_1_6"/>
<dbReference type="UniPathway" id="UPA00241">
    <property type="reaction ID" value="UER00352"/>
</dbReference>
<dbReference type="Proteomes" id="UP000000607">
    <property type="component" value="Chromosome"/>
</dbReference>
<dbReference type="GO" id="GO:0005737">
    <property type="term" value="C:cytoplasm"/>
    <property type="evidence" value="ECO:0007669"/>
    <property type="project" value="UniProtKB-SubCell"/>
</dbReference>
<dbReference type="GO" id="GO:0005524">
    <property type="term" value="F:ATP binding"/>
    <property type="evidence" value="ECO:0007669"/>
    <property type="project" value="UniProtKB-UniRule"/>
</dbReference>
<dbReference type="GO" id="GO:0004594">
    <property type="term" value="F:pantothenate kinase activity"/>
    <property type="evidence" value="ECO:0007669"/>
    <property type="project" value="UniProtKB-UniRule"/>
</dbReference>
<dbReference type="GO" id="GO:0015937">
    <property type="term" value="P:coenzyme A biosynthetic process"/>
    <property type="evidence" value="ECO:0007669"/>
    <property type="project" value="UniProtKB-UniRule"/>
</dbReference>
<dbReference type="CDD" id="cd02025">
    <property type="entry name" value="PanK"/>
    <property type="match status" value="1"/>
</dbReference>
<dbReference type="FunFam" id="3.40.50.300:FF:000242">
    <property type="entry name" value="Pantothenate kinase"/>
    <property type="match status" value="1"/>
</dbReference>
<dbReference type="Gene3D" id="3.40.50.300">
    <property type="entry name" value="P-loop containing nucleotide triphosphate hydrolases"/>
    <property type="match status" value="1"/>
</dbReference>
<dbReference type="HAMAP" id="MF_00215">
    <property type="entry name" value="Pantothen_kinase_1"/>
    <property type="match status" value="1"/>
</dbReference>
<dbReference type="InterPro" id="IPR027417">
    <property type="entry name" value="P-loop_NTPase"/>
</dbReference>
<dbReference type="InterPro" id="IPR004566">
    <property type="entry name" value="PanK"/>
</dbReference>
<dbReference type="InterPro" id="IPR006083">
    <property type="entry name" value="PRK/URK"/>
</dbReference>
<dbReference type="NCBIfam" id="TIGR00554">
    <property type="entry name" value="panK_bact"/>
    <property type="match status" value="1"/>
</dbReference>
<dbReference type="PANTHER" id="PTHR10285">
    <property type="entry name" value="URIDINE KINASE"/>
    <property type="match status" value="1"/>
</dbReference>
<dbReference type="Pfam" id="PF00485">
    <property type="entry name" value="PRK"/>
    <property type="match status" value="1"/>
</dbReference>
<dbReference type="PIRSF" id="PIRSF000545">
    <property type="entry name" value="Pantothenate_kin"/>
    <property type="match status" value="1"/>
</dbReference>
<dbReference type="SUPFAM" id="SSF52540">
    <property type="entry name" value="P-loop containing nucleoside triphosphate hydrolases"/>
    <property type="match status" value="1"/>
</dbReference>
<organism>
    <name type="scientific">Mannheimia succiniciproducens (strain KCTC 0769BP / MBEL55E)</name>
    <dbReference type="NCBI Taxonomy" id="221988"/>
    <lineage>
        <taxon>Bacteria</taxon>
        <taxon>Pseudomonadati</taxon>
        <taxon>Pseudomonadota</taxon>
        <taxon>Gammaproteobacteria</taxon>
        <taxon>Pasteurellales</taxon>
        <taxon>Pasteurellaceae</taxon>
        <taxon>Basfia</taxon>
    </lineage>
</organism>
<accession>Q65QG5</accession>